<name>CSPLN_MAIZE</name>
<sequence>MAGLAGRPGSWGGLVLRVGQALFAAACIGVMGSSLGFASYTAFCYLIASMGLQMLWSFGLACLDGYAIRANKDLTSPILLSLFVVGDWVTAILSFAASSSAAGVVILFQKDVLFCRRYPQLPCGKYELATAFAFLSWALSATSALIMFWLLAAF</sequence>
<evidence type="ECO:0000250" key="1"/>
<evidence type="ECO:0000255" key="2"/>
<evidence type="ECO:0000305" key="3"/>
<comment type="subunit">
    <text evidence="1">Homodimer and heterodimers.</text>
</comment>
<comment type="subcellular location">
    <subcellularLocation>
        <location evidence="1">Cell membrane</location>
        <topology evidence="1">Multi-pass membrane protein</topology>
    </subcellularLocation>
</comment>
<comment type="similarity">
    <text evidence="3">Belongs to the Casparian strip membrane proteins (CASP) family.</text>
</comment>
<protein>
    <recommendedName>
        <fullName>CASP-like protein 5B2</fullName>
        <shortName>ZmCASPL5B2</shortName>
    </recommendedName>
</protein>
<keyword id="KW-1003">Cell membrane</keyword>
<keyword id="KW-0472">Membrane</keyword>
<keyword id="KW-1185">Reference proteome</keyword>
<keyword id="KW-0812">Transmembrane</keyword>
<keyword id="KW-1133">Transmembrane helix</keyword>
<dbReference type="EMBL" id="EU962137">
    <property type="protein sequence ID" value="ACG34255.1"/>
    <property type="molecule type" value="mRNA"/>
</dbReference>
<dbReference type="RefSeq" id="NP_001143693.1">
    <property type="nucleotide sequence ID" value="NM_001150221.3"/>
</dbReference>
<dbReference type="FunCoup" id="B6TAX2">
    <property type="interactions" value="33"/>
</dbReference>
<dbReference type="PaxDb" id="4577-GRMZM2G054227_P01"/>
<dbReference type="EnsemblPlants" id="Zm00001eb347640_T001">
    <property type="protein sequence ID" value="Zm00001eb347640_P001"/>
    <property type="gene ID" value="Zm00001eb347640"/>
</dbReference>
<dbReference type="GeneID" id="100276424"/>
<dbReference type="Gramene" id="Zm00001eb347640_T001">
    <property type="protein sequence ID" value="Zm00001eb347640_P001"/>
    <property type="gene ID" value="Zm00001eb347640"/>
</dbReference>
<dbReference type="KEGG" id="zma:100276424"/>
<dbReference type="eggNOG" id="ENOG502RXNM">
    <property type="taxonomic scope" value="Eukaryota"/>
</dbReference>
<dbReference type="HOGENOM" id="CLU_103961_1_0_1"/>
<dbReference type="InParanoid" id="B6TAX2"/>
<dbReference type="OMA" id="CHMFQIS"/>
<dbReference type="OrthoDB" id="754299at2759"/>
<dbReference type="Proteomes" id="UP000007305">
    <property type="component" value="Chromosome 8"/>
</dbReference>
<dbReference type="ExpressionAtlas" id="B6TAX2">
    <property type="expression patterns" value="baseline and differential"/>
</dbReference>
<dbReference type="GO" id="GO:0016020">
    <property type="term" value="C:membrane"/>
    <property type="evidence" value="ECO:0000318"/>
    <property type="project" value="GO_Central"/>
</dbReference>
<dbReference type="GO" id="GO:0005886">
    <property type="term" value="C:plasma membrane"/>
    <property type="evidence" value="ECO:0007669"/>
    <property type="project" value="UniProtKB-SubCell"/>
</dbReference>
<dbReference type="InterPro" id="IPR006702">
    <property type="entry name" value="CASP_dom"/>
</dbReference>
<dbReference type="InterPro" id="IPR045009">
    <property type="entry name" value="CASPL-5"/>
</dbReference>
<dbReference type="PANTHER" id="PTHR32021:SF41">
    <property type="entry name" value="CASP-LIKE PROTEIN 5B2"/>
    <property type="match status" value="1"/>
</dbReference>
<dbReference type="PANTHER" id="PTHR32021">
    <property type="entry name" value="CASP-LIKE PROTEIN 5B3"/>
    <property type="match status" value="1"/>
</dbReference>
<dbReference type="Pfam" id="PF04535">
    <property type="entry name" value="CASP_dom"/>
    <property type="match status" value="1"/>
</dbReference>
<reference key="1">
    <citation type="journal article" date="2009" name="Plant Mol. Biol.">
        <title>Insights into corn genes derived from large-scale cDNA sequencing.</title>
        <authorList>
            <person name="Alexandrov N.N."/>
            <person name="Brover V.V."/>
            <person name="Freidin S."/>
            <person name="Troukhan M.E."/>
            <person name="Tatarinova T.V."/>
            <person name="Zhang H."/>
            <person name="Swaller T.J."/>
            <person name="Lu Y.-P."/>
            <person name="Bouck J."/>
            <person name="Flavell R.B."/>
            <person name="Feldmann K.A."/>
        </authorList>
    </citation>
    <scope>NUCLEOTIDE SEQUENCE [LARGE SCALE MRNA]</scope>
</reference>
<reference key="2">
    <citation type="journal article" date="2014" name="Plant Physiol.">
        <title>Functional and evolutionary analysis of the CASPARIAN STRIP MEMBRANE DOMAIN PROTEIN family.</title>
        <authorList>
            <person name="Roppolo D."/>
            <person name="Boeckmann B."/>
            <person name="Pfister A."/>
            <person name="Boutet E."/>
            <person name="Rubio M.C."/>
            <person name="Denervaud-Tendon V."/>
            <person name="Vermeer J.E."/>
            <person name="Gheyselinck J."/>
            <person name="Xenarios I."/>
            <person name="Geldner N."/>
        </authorList>
    </citation>
    <scope>GENE FAMILY</scope>
    <scope>NOMENCLATURE</scope>
</reference>
<organism>
    <name type="scientific">Zea mays</name>
    <name type="common">Maize</name>
    <dbReference type="NCBI Taxonomy" id="4577"/>
    <lineage>
        <taxon>Eukaryota</taxon>
        <taxon>Viridiplantae</taxon>
        <taxon>Streptophyta</taxon>
        <taxon>Embryophyta</taxon>
        <taxon>Tracheophyta</taxon>
        <taxon>Spermatophyta</taxon>
        <taxon>Magnoliopsida</taxon>
        <taxon>Liliopsida</taxon>
        <taxon>Poales</taxon>
        <taxon>Poaceae</taxon>
        <taxon>PACMAD clade</taxon>
        <taxon>Panicoideae</taxon>
        <taxon>Andropogonodae</taxon>
        <taxon>Andropogoneae</taxon>
        <taxon>Tripsacinae</taxon>
        <taxon>Zea</taxon>
    </lineage>
</organism>
<proteinExistence type="evidence at transcript level"/>
<feature type="chain" id="PRO_0000418704" description="CASP-like protein 5B2">
    <location>
        <begin position="1"/>
        <end position="154"/>
    </location>
</feature>
<feature type="topological domain" description="Cytoplasmic" evidence="2">
    <location>
        <begin position="1"/>
        <end position="17"/>
    </location>
</feature>
<feature type="transmembrane region" description="Helical" evidence="2">
    <location>
        <begin position="18"/>
        <end position="38"/>
    </location>
</feature>
<feature type="topological domain" description="Extracellular" evidence="2">
    <location>
        <begin position="39"/>
        <end position="42"/>
    </location>
</feature>
<feature type="transmembrane region" description="Helical" evidence="2">
    <location>
        <begin position="43"/>
        <end position="63"/>
    </location>
</feature>
<feature type="topological domain" description="Cytoplasmic" evidence="2">
    <location>
        <begin position="64"/>
        <end position="87"/>
    </location>
</feature>
<feature type="transmembrane region" description="Helical" evidence="2">
    <location>
        <begin position="88"/>
        <end position="107"/>
    </location>
</feature>
<feature type="topological domain" description="Extracellular" evidence="2">
    <location>
        <begin position="108"/>
        <end position="130"/>
    </location>
</feature>
<feature type="transmembrane region" description="Helical" evidence="2">
    <location>
        <begin position="131"/>
        <end position="151"/>
    </location>
</feature>
<feature type="topological domain" description="Cytoplasmic" evidence="2">
    <location>
        <begin position="152"/>
        <end position="154"/>
    </location>
</feature>
<accession>B6TAX2</accession>